<evidence type="ECO:0000250" key="1">
    <source>
        <dbReference type="UniProtKB" id="P01602"/>
    </source>
</evidence>
<evidence type="ECO:0000255" key="2"/>
<evidence type="ECO:0000255" key="3">
    <source>
        <dbReference type="PROSITE-ProRule" id="PRU00114"/>
    </source>
</evidence>
<evidence type="ECO:0000269" key="4">
    <source>
    </source>
</evidence>
<evidence type="ECO:0000269" key="5">
    <source>
    </source>
</evidence>
<evidence type="ECO:0000303" key="6">
    <source>
    </source>
</evidence>
<evidence type="ECO:0000303" key="7">
    <source>
    </source>
</evidence>
<evidence type="ECO:0000303" key="8">
    <source>
    </source>
</evidence>
<evidence type="ECO:0000303" key="9">
    <source>
    </source>
</evidence>
<evidence type="ECO:0000303" key="10">
    <source>
    </source>
</evidence>
<evidence type="ECO:0000303" key="11">
    <source ref="5"/>
</evidence>
<evidence type="ECO:0000305" key="12"/>
<evidence type="ECO:0000305" key="13">
    <source>
    </source>
</evidence>
<accession>P01601</accession>
<accession>A0A0B4J1Z3</accession>
<dbReference type="EMBL" id="V00558">
    <property type="protein sequence ID" value="CAA23824.1"/>
    <property type="molecule type" value="Genomic_DNA"/>
</dbReference>
<dbReference type="EMBL" id="K01322">
    <property type="protein sequence ID" value="AAA58930.1"/>
    <property type="molecule type" value="Genomic_DNA"/>
</dbReference>
<dbReference type="EMBL" id="K01324">
    <property type="protein sequence ID" value="AAA58932.1"/>
    <property type="molecule type" value="Genomic_DNA"/>
</dbReference>
<dbReference type="EMBL" id="AC243981">
    <property type="status" value="NOT_ANNOTATED_CDS"/>
    <property type="molecule type" value="Genomic_DNA"/>
</dbReference>
<dbReference type="PIR" id="A01881">
    <property type="entry name" value="K1HU11"/>
</dbReference>
<dbReference type="SMR" id="P01601"/>
<dbReference type="FunCoup" id="P01601">
    <property type="interactions" value="424"/>
</dbReference>
<dbReference type="IMGT_GENE-DB" id="IGKV1D-16"/>
<dbReference type="iPTMnet" id="P01601"/>
<dbReference type="PhosphoSitePlus" id="P01601"/>
<dbReference type="BioMuta" id="IGKV1D-16"/>
<dbReference type="DMDM" id="125765"/>
<dbReference type="jPOST" id="P01601"/>
<dbReference type="MassIVE" id="P01601"/>
<dbReference type="Ensembl" id="ENST00000492446.1">
    <property type="protein sequence ID" value="ENSP00000418200.1"/>
    <property type="gene ID" value="ENSG00000241244.1"/>
</dbReference>
<dbReference type="AGR" id="HGNC:5748"/>
<dbReference type="GeneCards" id="IGKV1D-16"/>
<dbReference type="HGNC" id="HGNC:5748">
    <property type="gene designation" value="IGKV1D-16"/>
</dbReference>
<dbReference type="HPA" id="ENSG00000241244">
    <property type="expression patterns" value="Group enriched (gallbladder, intestine, lymphoid tissue)"/>
</dbReference>
<dbReference type="neXtProt" id="NX_P01601"/>
<dbReference type="OpenTargets" id="ENSG00000241244"/>
<dbReference type="VEuPathDB" id="HostDB:ENSG00000241244"/>
<dbReference type="GeneTree" id="ENSGT00940000153048"/>
<dbReference type="InParanoid" id="P01601"/>
<dbReference type="OMA" id="TITINCQ"/>
<dbReference type="OrthoDB" id="9629570at2759"/>
<dbReference type="PAN-GO" id="P01601">
    <property type="GO annotations" value="3 GO annotations based on evolutionary models"/>
</dbReference>
<dbReference type="PhylomeDB" id="P01601"/>
<dbReference type="PathwayCommons" id="P01601"/>
<dbReference type="Reactome" id="R-HSA-166663">
    <property type="pathway name" value="Initial triggering of complement"/>
</dbReference>
<dbReference type="Reactome" id="R-HSA-173623">
    <property type="pathway name" value="Classical antibody-mediated complement activation"/>
</dbReference>
<dbReference type="Reactome" id="R-HSA-198933">
    <property type="pathway name" value="Immunoregulatory interactions between a Lymphoid and a non-Lymphoid cell"/>
</dbReference>
<dbReference type="Reactome" id="R-HSA-202733">
    <property type="pathway name" value="Cell surface interactions at the vascular wall"/>
</dbReference>
<dbReference type="Reactome" id="R-HSA-2029481">
    <property type="pathway name" value="FCGR activation"/>
</dbReference>
<dbReference type="Reactome" id="R-HSA-2029482">
    <property type="pathway name" value="Regulation of actin dynamics for phagocytic cup formation"/>
</dbReference>
<dbReference type="Reactome" id="R-HSA-2029485">
    <property type="pathway name" value="Role of phospholipids in phagocytosis"/>
</dbReference>
<dbReference type="Reactome" id="R-HSA-2168880">
    <property type="pathway name" value="Scavenging of heme from plasma"/>
</dbReference>
<dbReference type="Reactome" id="R-HSA-2454202">
    <property type="pathway name" value="Fc epsilon receptor (FCERI) signaling"/>
</dbReference>
<dbReference type="Reactome" id="R-HSA-2730905">
    <property type="pathway name" value="Role of LAT2/NTAL/LAB on calcium mobilization"/>
</dbReference>
<dbReference type="Reactome" id="R-HSA-2871796">
    <property type="pathway name" value="FCERI mediated MAPK activation"/>
</dbReference>
<dbReference type="Reactome" id="R-HSA-2871809">
    <property type="pathway name" value="FCERI mediated Ca+2 mobilization"/>
</dbReference>
<dbReference type="Reactome" id="R-HSA-2871837">
    <property type="pathway name" value="FCERI mediated NF-kB activation"/>
</dbReference>
<dbReference type="Reactome" id="R-HSA-5690714">
    <property type="pathway name" value="CD22 mediated BCR regulation"/>
</dbReference>
<dbReference type="Reactome" id="R-HSA-9664323">
    <property type="pathway name" value="FCGR3A-mediated IL10 synthesis"/>
</dbReference>
<dbReference type="Reactome" id="R-HSA-9664422">
    <property type="pathway name" value="FCGR3A-mediated phagocytosis"/>
</dbReference>
<dbReference type="Reactome" id="R-HSA-9679191">
    <property type="pathway name" value="Potential therapeutics for SARS"/>
</dbReference>
<dbReference type="Reactome" id="R-HSA-977606">
    <property type="pathway name" value="Regulation of Complement cascade"/>
</dbReference>
<dbReference type="Reactome" id="R-HSA-983695">
    <property type="pathway name" value="Antigen activates B Cell Receptor (BCR) leading to generation of second messengers"/>
</dbReference>
<dbReference type="Pharos" id="P01601">
    <property type="development level" value="Tdark"/>
</dbReference>
<dbReference type="PRO" id="PR:P01601"/>
<dbReference type="Proteomes" id="UP000005640">
    <property type="component" value="Chromosome 2"/>
</dbReference>
<dbReference type="RNAct" id="P01601">
    <property type="molecule type" value="protein"/>
</dbReference>
<dbReference type="Bgee" id="ENSG00000241244">
    <property type="expression patterns" value="Expressed in rectum and 80 other cell types or tissues"/>
</dbReference>
<dbReference type="GO" id="GO:0005576">
    <property type="term" value="C:extracellular region"/>
    <property type="evidence" value="ECO:0000304"/>
    <property type="project" value="Reactome"/>
</dbReference>
<dbReference type="GO" id="GO:0019814">
    <property type="term" value="C:immunoglobulin complex"/>
    <property type="evidence" value="ECO:0000318"/>
    <property type="project" value="GO_Central"/>
</dbReference>
<dbReference type="GO" id="GO:0005886">
    <property type="term" value="C:plasma membrane"/>
    <property type="evidence" value="ECO:0000304"/>
    <property type="project" value="Reactome"/>
</dbReference>
<dbReference type="GO" id="GO:0003823">
    <property type="term" value="F:antigen binding"/>
    <property type="evidence" value="ECO:0000303"/>
    <property type="project" value="UniProtKB"/>
</dbReference>
<dbReference type="GO" id="GO:0002250">
    <property type="term" value="P:adaptive immune response"/>
    <property type="evidence" value="ECO:0007669"/>
    <property type="project" value="UniProtKB-KW"/>
</dbReference>
<dbReference type="GO" id="GO:0006955">
    <property type="term" value="P:immune response"/>
    <property type="evidence" value="ECO:0000318"/>
    <property type="project" value="GO_Central"/>
</dbReference>
<dbReference type="CDD" id="cd04980">
    <property type="entry name" value="IgV_L_kappa"/>
    <property type="match status" value="1"/>
</dbReference>
<dbReference type="FunFam" id="2.60.40.10:FF:000212">
    <property type="entry name" value="Immunoglobulin kappa chain variable 12-38"/>
    <property type="match status" value="1"/>
</dbReference>
<dbReference type="Gene3D" id="2.60.40.10">
    <property type="entry name" value="Immunoglobulins"/>
    <property type="match status" value="1"/>
</dbReference>
<dbReference type="InterPro" id="IPR007110">
    <property type="entry name" value="Ig-like_dom"/>
</dbReference>
<dbReference type="InterPro" id="IPR036179">
    <property type="entry name" value="Ig-like_dom_sf"/>
</dbReference>
<dbReference type="InterPro" id="IPR013783">
    <property type="entry name" value="Ig-like_fold"/>
</dbReference>
<dbReference type="InterPro" id="IPR003599">
    <property type="entry name" value="Ig_sub"/>
</dbReference>
<dbReference type="InterPro" id="IPR013106">
    <property type="entry name" value="Ig_V-set"/>
</dbReference>
<dbReference type="InterPro" id="IPR050150">
    <property type="entry name" value="IgV_Light_Chain"/>
</dbReference>
<dbReference type="PANTHER" id="PTHR23267">
    <property type="entry name" value="IMMUNOGLOBULIN LIGHT CHAIN"/>
    <property type="match status" value="1"/>
</dbReference>
<dbReference type="Pfam" id="PF07686">
    <property type="entry name" value="V-set"/>
    <property type="match status" value="1"/>
</dbReference>
<dbReference type="SMART" id="SM00409">
    <property type="entry name" value="IG"/>
    <property type="match status" value="1"/>
</dbReference>
<dbReference type="SMART" id="SM00406">
    <property type="entry name" value="IGv"/>
    <property type="match status" value="1"/>
</dbReference>
<dbReference type="SUPFAM" id="SSF48726">
    <property type="entry name" value="Immunoglobulin"/>
    <property type="match status" value="1"/>
</dbReference>
<dbReference type="PROSITE" id="PS50835">
    <property type="entry name" value="IG_LIKE"/>
    <property type="match status" value="1"/>
</dbReference>
<keyword id="KW-1064">Adaptive immunity</keyword>
<keyword id="KW-1003">Cell membrane</keyword>
<keyword id="KW-1015">Disulfide bond</keyword>
<keyword id="KW-0391">Immunity</keyword>
<keyword id="KW-1280">Immunoglobulin</keyword>
<keyword id="KW-0393">Immunoglobulin domain</keyword>
<keyword id="KW-0472">Membrane</keyword>
<keyword id="KW-1267">Proteomics identification</keyword>
<keyword id="KW-1185">Reference proteome</keyword>
<keyword id="KW-0964">Secreted</keyword>
<keyword id="KW-0732">Signal</keyword>
<reference key="1">
    <citation type="journal article" date="1980" name="Nature">
        <title>Human immunoglobulin variable region genes -- DNA sequences of two V kappa genes and a pseudogene.</title>
        <authorList>
            <person name="Bentley D.L."/>
            <person name="Rabbitts T.H."/>
        </authorList>
    </citation>
    <scope>NUCLEOTIDE SEQUENCE [GENOMIC DNA] (IMGT ALLELE IGKV1D-16*02)</scope>
    <scope>VARIANT ARG-48</scope>
</reference>
<reference key="2">
    <citation type="journal article" date="1983" name="Cell">
        <title>Evolution of immunoglobulin V genes: evidence indicating that recently duplicated human V kappa sequences have diverged by gene conversion.</title>
        <authorList>
            <person name="Bentley D.L."/>
            <person name="Rabbitts T.H."/>
        </authorList>
    </citation>
    <scope>NUCLEOTIDE SEQUENCE [GENOMIC DNA] (IMGT ALLELE IGKV1D-16*02)</scope>
    <scope>VARIANT ARG-48</scope>
</reference>
<reference key="3">
    <citation type="journal article" date="2005" name="Nature">
        <title>Generation and annotation of the DNA sequences of human chromosomes 2 and 4.</title>
        <authorList>
            <person name="Hillier L.W."/>
            <person name="Graves T.A."/>
            <person name="Fulton R.S."/>
            <person name="Fulton L.A."/>
            <person name="Pepin K.H."/>
            <person name="Minx P."/>
            <person name="Wagner-McPherson C."/>
            <person name="Layman D."/>
            <person name="Wylie K."/>
            <person name="Sekhon M."/>
            <person name="Becker M.C."/>
            <person name="Fewell G.A."/>
            <person name="Delehaunty K.D."/>
            <person name="Miner T.L."/>
            <person name="Nash W.E."/>
            <person name="Kremitzki C."/>
            <person name="Oddy L."/>
            <person name="Du H."/>
            <person name="Sun H."/>
            <person name="Bradshaw-Cordum H."/>
            <person name="Ali J."/>
            <person name="Carter J."/>
            <person name="Cordes M."/>
            <person name="Harris A."/>
            <person name="Isak A."/>
            <person name="van Brunt A."/>
            <person name="Nguyen C."/>
            <person name="Du F."/>
            <person name="Courtney L."/>
            <person name="Kalicki J."/>
            <person name="Ozersky P."/>
            <person name="Abbott S."/>
            <person name="Armstrong J."/>
            <person name="Belter E.A."/>
            <person name="Caruso L."/>
            <person name="Cedroni M."/>
            <person name="Cotton M."/>
            <person name="Davidson T."/>
            <person name="Desai A."/>
            <person name="Elliott G."/>
            <person name="Erb T."/>
            <person name="Fronick C."/>
            <person name="Gaige T."/>
            <person name="Haakenson W."/>
            <person name="Haglund K."/>
            <person name="Holmes A."/>
            <person name="Harkins R."/>
            <person name="Kim K."/>
            <person name="Kruchowski S.S."/>
            <person name="Strong C.M."/>
            <person name="Grewal N."/>
            <person name="Goyea E."/>
            <person name="Hou S."/>
            <person name="Levy A."/>
            <person name="Martinka S."/>
            <person name="Mead K."/>
            <person name="McLellan M.D."/>
            <person name="Meyer R."/>
            <person name="Randall-Maher J."/>
            <person name="Tomlinson C."/>
            <person name="Dauphin-Kohlberg S."/>
            <person name="Kozlowicz-Reilly A."/>
            <person name="Shah N."/>
            <person name="Swearengen-Shahid S."/>
            <person name="Snider J."/>
            <person name="Strong J.T."/>
            <person name="Thompson J."/>
            <person name="Yoakum M."/>
            <person name="Leonard S."/>
            <person name="Pearman C."/>
            <person name="Trani L."/>
            <person name="Radionenko M."/>
            <person name="Waligorski J.E."/>
            <person name="Wang C."/>
            <person name="Rock S.M."/>
            <person name="Tin-Wollam A.-M."/>
            <person name="Maupin R."/>
            <person name="Latreille P."/>
            <person name="Wendl M.C."/>
            <person name="Yang S.-P."/>
            <person name="Pohl C."/>
            <person name="Wallis J.W."/>
            <person name="Spieth J."/>
            <person name="Bieri T.A."/>
            <person name="Berkowicz N."/>
            <person name="Nelson J.O."/>
            <person name="Osborne J."/>
            <person name="Ding L."/>
            <person name="Meyer R."/>
            <person name="Sabo A."/>
            <person name="Shotland Y."/>
            <person name="Sinha P."/>
            <person name="Wohldmann P.E."/>
            <person name="Cook L.L."/>
            <person name="Hickenbotham M.T."/>
            <person name="Eldred J."/>
            <person name="Williams D."/>
            <person name="Jones T.A."/>
            <person name="She X."/>
            <person name="Ciccarelli F.D."/>
            <person name="Izaurralde E."/>
            <person name="Taylor J."/>
            <person name="Schmutz J."/>
            <person name="Myers R.M."/>
            <person name="Cox D.R."/>
            <person name="Huang X."/>
            <person name="McPherson J.D."/>
            <person name="Mardis E.R."/>
            <person name="Clifton S.W."/>
            <person name="Warren W.C."/>
            <person name="Chinwalla A.T."/>
            <person name="Eddy S.R."/>
            <person name="Marra M.A."/>
            <person name="Ovcharenko I."/>
            <person name="Furey T.S."/>
            <person name="Miller W."/>
            <person name="Eichler E.E."/>
            <person name="Bork P."/>
            <person name="Suyama M."/>
            <person name="Torrents D."/>
            <person name="Waterston R.H."/>
            <person name="Wilson R.K."/>
        </authorList>
    </citation>
    <scope>NUCLEOTIDE SEQUENCE [LARGE SCALE GENOMIC DNA] (IMGT ALLELE IGKV1D-16*01)</scope>
</reference>
<reference key="4">
    <citation type="journal article" date="2001" name="Exp. Clin. Immunogenet.">
        <title>Nomenclature of the human immunoglobulin kappa (IGK) genes.</title>
        <authorList>
            <person name="Lefranc M.P."/>
        </authorList>
    </citation>
    <scope>NOMEMCLATURE</scope>
</reference>
<reference key="5">
    <citation type="book" date="2001" name="The Immunoglobulin FactsBook.">
        <title>The Immunoglobulin FactsBook.</title>
        <editorList>
            <person name="Lefranc M.P."/>
            <person name="Lefranc G."/>
        </editorList>
        <authorList>
            <person name="Lefranc M.P."/>
            <person name="Lefranc G."/>
        </authorList>
    </citation>
    <scope>NOMENCLATURE</scope>
</reference>
<reference key="6">
    <citation type="journal article" date="2007" name="Annu. Rev. Genet.">
        <title>Immunoglobulin somatic hypermutation.</title>
        <authorList>
            <person name="Teng G."/>
            <person name="Papavasiliou F.N."/>
        </authorList>
    </citation>
    <scope>REVIEW ON SOMATIC HYPERMUTATION</scope>
</reference>
<reference key="7">
    <citation type="journal article" date="2010" name="J. Allergy Clin. Immunol.">
        <title>Structure and function of immunoglobulins.</title>
        <authorList>
            <person name="Schroeder H.W. Jr."/>
            <person name="Cavacini L."/>
        </authorList>
    </citation>
    <scope>REVIEW ON IMMUNOGLOBULINS</scope>
</reference>
<reference key="8">
    <citation type="journal article" date="2012" name="Nat. Rev. Immunol.">
        <title>Molecular programming of B cell memory.</title>
        <authorList>
            <person name="McHeyzer-Williams M."/>
            <person name="Okitsu S."/>
            <person name="Wang N."/>
            <person name="McHeyzer-Williams L."/>
        </authorList>
    </citation>
    <scope>REVIEW ON FUNCTION</scope>
</reference>
<reference key="9">
    <citation type="journal article" date="2014" name="Front. Immunol.">
        <title>Immunoglobulin and T Cell Receptor Genes: IMGT((R)) and the Birth and Rise of Immunoinformatics.</title>
        <authorList>
            <person name="Lefranc M.P."/>
        </authorList>
    </citation>
    <scope>NOMENCLATURE</scope>
</reference>
<comment type="function">
    <text evidence="7 8 9 10">V region of the variable domain of immunoglobulin light chains that participates in the antigen recognition (PubMed:24600447). Immunoglobulins, also known as antibodies, are membrane-bound or secreted glycoproteins produced by B lymphocytes. In the recognition phase of humoral immunity, the membrane-bound immunoglobulins serve as receptors which, upon binding of a specific antigen, trigger the clonal expansion and differentiation of B lymphocytes into immunoglobulins-secreting plasma cells. Secreted immunoglobulins mediate the effector phase of humoral immunity, which results in the elimination of bound antigens (PubMed:20176268, PubMed:22158414). The antigen binding site is formed by the variable domain of one heavy chain, together with that of its associated light chain. Thus, each immunoglobulin has two antigen binding sites with remarkable affinity for a particular antigen. The variable domains are assembled by a process called V-(D)-J rearrangement and can then be subjected to somatic hypermutations which, after exposure to antigen and selection, allow affinity maturation for a particular antigen (PubMed:17576170, PubMed:20176268).</text>
</comment>
<comment type="subunit">
    <text evidence="8">Immunoglobulins are composed of two identical heavy chains and two identical light chains; disulfide-linked.</text>
</comment>
<comment type="subcellular location">
    <subcellularLocation>
        <location evidence="8 9">Secreted</location>
    </subcellularLocation>
    <subcellularLocation>
        <location evidence="8 9">Cell membrane</location>
    </subcellularLocation>
</comment>
<comment type="polymorphism">
    <text>There are several alleles. The sequence shown is that of IMGT allele IGKV1D-16*01.</text>
</comment>
<comment type="caution">
    <text evidence="12">For an example of a full-length immunoglobulin kappa light chain see AC P0DOX7.</text>
</comment>
<sequence length="117" mass="12730">MDMRVLAQLLGLLLLCFPGARCDIQMTQSPSSLSASVGDRVTITCRASQGISSWLAWYQQKPEKAPKSLIYAASSLQSGVPSRFSGSGSGTDFTLTISSLQPEDFATYYCQQYNSYP</sequence>
<name>KVD16_HUMAN</name>
<feature type="signal peptide" evidence="2">
    <location>
        <begin position="1"/>
        <end position="22"/>
    </location>
</feature>
<feature type="chain" id="PRO_0000015168" description="Immunoglobulin kappa variable 1D-16" evidence="2">
    <location>
        <begin position="23"/>
        <end position="117"/>
    </location>
</feature>
<feature type="domain" description="Ig-like" evidence="3">
    <location>
        <begin position="24"/>
        <end position="117" status="greater than"/>
    </location>
</feature>
<feature type="region of interest" description="Framework-1" evidence="1">
    <location>
        <begin position="23"/>
        <end position="45"/>
    </location>
</feature>
<feature type="region of interest" description="Complementarity-determining-1" evidence="1">
    <location>
        <begin position="46"/>
        <end position="56"/>
    </location>
</feature>
<feature type="region of interest" description="Framework-2" evidence="1">
    <location>
        <begin position="57"/>
        <end position="71"/>
    </location>
</feature>
<feature type="region of interest" description="Complementarity-determining-2" evidence="1">
    <location>
        <begin position="72"/>
        <end position="78"/>
    </location>
</feature>
<feature type="region of interest" description="Framework-3" evidence="1">
    <location>
        <begin position="79"/>
        <end position="110"/>
    </location>
</feature>
<feature type="region of interest" description="Complementarity-determining-3" evidence="1">
    <location>
        <begin position="111"/>
        <end position="117" status="greater than"/>
    </location>
</feature>
<feature type="disulfide bond" evidence="3">
    <location>
        <begin position="45"/>
        <end position="110"/>
    </location>
</feature>
<feature type="sequence variant" id="VAR_073376" description="In IMGT allele IGKV1D-16*02." evidence="4 5">
    <original>S</original>
    <variation>R</variation>
    <location>
        <position position="48"/>
    </location>
</feature>
<feature type="non-terminal residue">
    <location>
        <position position="117"/>
    </location>
</feature>
<organism>
    <name type="scientific">Homo sapiens</name>
    <name type="common">Human</name>
    <dbReference type="NCBI Taxonomy" id="9606"/>
    <lineage>
        <taxon>Eukaryota</taxon>
        <taxon>Metazoa</taxon>
        <taxon>Chordata</taxon>
        <taxon>Craniata</taxon>
        <taxon>Vertebrata</taxon>
        <taxon>Euteleostomi</taxon>
        <taxon>Mammalia</taxon>
        <taxon>Eutheria</taxon>
        <taxon>Euarchontoglires</taxon>
        <taxon>Primates</taxon>
        <taxon>Haplorrhini</taxon>
        <taxon>Catarrhini</taxon>
        <taxon>Hominidae</taxon>
        <taxon>Homo</taxon>
    </lineage>
</organism>
<gene>
    <name evidence="6 11" type="primary">IGKV1D-16</name>
</gene>
<proteinExistence type="evidence at protein level"/>
<protein>
    <recommendedName>
        <fullName evidence="6 11">Immunoglobulin kappa variable 1D-16</fullName>
    </recommendedName>
    <alternativeName>
        <fullName evidence="13">Ig kappa chain V-I region HK146</fullName>
    </alternativeName>
    <alternativeName>
        <fullName evidence="13">Ig kappa chain V-I region HK189</fullName>
    </alternativeName>
</protein>